<sequence>CYISNCPIG</sequence>
<feature type="peptide" id="PRO_0000044086" description="Isotocin">
    <location>
        <begin position="1"/>
        <end position="9"/>
    </location>
</feature>
<feature type="modified residue" description="Glycine amide" evidence="1">
    <location>
        <position position="9"/>
    </location>
</feature>
<feature type="disulfide bond">
    <location>
        <begin position="1"/>
        <end position="6"/>
    </location>
</feature>
<name>ISOT_CYPCA</name>
<proteinExistence type="evidence at protein level"/>
<dbReference type="PIR" id="A61364">
    <property type="entry name" value="A61364"/>
</dbReference>
<dbReference type="Proteomes" id="UP000694384">
    <property type="component" value="Unplaced"/>
</dbReference>
<dbReference type="Proteomes" id="UP000694427">
    <property type="component" value="Unplaced"/>
</dbReference>
<dbReference type="Proteomes" id="UP000694700">
    <property type="component" value="Unplaced"/>
</dbReference>
<dbReference type="Proteomes" id="UP000694701">
    <property type="component" value="Unplaced"/>
</dbReference>
<dbReference type="Proteomes" id="UP001155660">
    <property type="component" value="Unplaced"/>
</dbReference>
<dbReference type="GO" id="GO:0005576">
    <property type="term" value="C:extracellular region"/>
    <property type="evidence" value="ECO:0007669"/>
    <property type="project" value="UniProtKB-SubCell"/>
</dbReference>
<dbReference type="GO" id="GO:0005185">
    <property type="term" value="F:neurohypophyseal hormone activity"/>
    <property type="evidence" value="ECO:0007669"/>
    <property type="project" value="InterPro"/>
</dbReference>
<dbReference type="InterPro" id="IPR022423">
    <property type="entry name" value="Neurohypophysial_hormone_CS"/>
</dbReference>
<dbReference type="Pfam" id="PF00220">
    <property type="entry name" value="Hormone_4"/>
    <property type="match status" value="1"/>
</dbReference>
<dbReference type="PROSITE" id="PS00264">
    <property type="entry name" value="NEUROHYPOPHYS_HORM"/>
    <property type="match status" value="1"/>
</dbReference>
<keyword id="KW-0027">Amidation</keyword>
<keyword id="KW-0903">Direct protein sequencing</keyword>
<keyword id="KW-1015">Disulfide bond</keyword>
<keyword id="KW-0372">Hormone</keyword>
<keyword id="KW-1185">Reference proteome</keyword>
<keyword id="KW-0964">Secreted</keyword>
<reference key="1">
    <citation type="journal article" date="1965" name="Comp. Biochem. Physiol.">
        <title>Characterization of neurohypophyseal hormones from a fresh water bony fish, the carp (Cyprinus carpio). Comparison with hormones from sea water bony fishs.</title>
        <authorList>
            <person name="Acher R."/>
            <person name="Chauvet J."/>
            <person name="Chauvet M.-T."/>
            <person name="Crepy D."/>
        </authorList>
    </citation>
    <scope>PROTEIN SEQUENCE</scope>
    <scope>AMIDATION AT GLY-9</scope>
    <source>
        <tissue>Pituitary</tissue>
    </source>
</reference>
<evidence type="ECO:0000269" key="1">
    <source>
    </source>
</evidence>
<evidence type="ECO:0000305" key="2"/>
<organism>
    <name type="scientific">Cyprinus carpio</name>
    <name type="common">Common carp</name>
    <dbReference type="NCBI Taxonomy" id="7962"/>
    <lineage>
        <taxon>Eukaryota</taxon>
        <taxon>Metazoa</taxon>
        <taxon>Chordata</taxon>
        <taxon>Craniata</taxon>
        <taxon>Vertebrata</taxon>
        <taxon>Euteleostomi</taxon>
        <taxon>Actinopterygii</taxon>
        <taxon>Neopterygii</taxon>
        <taxon>Teleostei</taxon>
        <taxon>Ostariophysi</taxon>
        <taxon>Cypriniformes</taxon>
        <taxon>Cyprinidae</taxon>
        <taxon>Cyprininae</taxon>
        <taxon>Cyprinus</taxon>
    </lineage>
</organism>
<accession>P42993</accession>
<comment type="function">
    <text>Antidiuretic hormone.</text>
</comment>
<comment type="subcellular location">
    <subcellularLocation>
        <location>Secreted</location>
    </subcellularLocation>
</comment>
<comment type="similarity">
    <text evidence="2">Belongs to the vasopressin/oxytocin family.</text>
</comment>
<protein>
    <recommendedName>
        <fullName>Isotocin</fullName>
    </recommendedName>
</protein>